<gene>
    <name evidence="1" type="primary">hemL</name>
    <name type="ordered locus">Msp_1180</name>
</gene>
<organism>
    <name type="scientific">Methanosphaera stadtmanae (strain ATCC 43021 / DSM 3091 / JCM 11832 / MCB-3)</name>
    <dbReference type="NCBI Taxonomy" id="339860"/>
    <lineage>
        <taxon>Archaea</taxon>
        <taxon>Methanobacteriati</taxon>
        <taxon>Methanobacteriota</taxon>
        <taxon>Methanomada group</taxon>
        <taxon>Methanobacteria</taxon>
        <taxon>Methanobacteriales</taxon>
        <taxon>Methanobacteriaceae</taxon>
        <taxon>Methanosphaera</taxon>
    </lineage>
</organism>
<evidence type="ECO:0000255" key="1">
    <source>
        <dbReference type="HAMAP-Rule" id="MF_00375"/>
    </source>
</evidence>
<dbReference type="EC" id="5.4.3.8" evidence="1"/>
<dbReference type="EMBL" id="CP000102">
    <property type="protein sequence ID" value="ABC57561.1"/>
    <property type="molecule type" value="Genomic_DNA"/>
</dbReference>
<dbReference type="RefSeq" id="WP_011406760.1">
    <property type="nucleotide sequence ID" value="NC_007681.1"/>
</dbReference>
<dbReference type="SMR" id="Q2NF42"/>
<dbReference type="STRING" id="339860.Msp_1180"/>
<dbReference type="GeneID" id="41325749"/>
<dbReference type="KEGG" id="mst:Msp_1180"/>
<dbReference type="eggNOG" id="arCOG00918">
    <property type="taxonomic scope" value="Archaea"/>
</dbReference>
<dbReference type="HOGENOM" id="CLU_016922_1_5_2"/>
<dbReference type="OrthoDB" id="6524at2157"/>
<dbReference type="UniPathway" id="UPA00251">
    <property type="reaction ID" value="UER00317"/>
</dbReference>
<dbReference type="Proteomes" id="UP000001931">
    <property type="component" value="Chromosome"/>
</dbReference>
<dbReference type="GO" id="GO:0005737">
    <property type="term" value="C:cytoplasm"/>
    <property type="evidence" value="ECO:0007669"/>
    <property type="project" value="UniProtKB-SubCell"/>
</dbReference>
<dbReference type="GO" id="GO:0042286">
    <property type="term" value="F:glutamate-1-semialdehyde 2,1-aminomutase activity"/>
    <property type="evidence" value="ECO:0007669"/>
    <property type="project" value="UniProtKB-UniRule"/>
</dbReference>
<dbReference type="GO" id="GO:0030170">
    <property type="term" value="F:pyridoxal phosphate binding"/>
    <property type="evidence" value="ECO:0007669"/>
    <property type="project" value="InterPro"/>
</dbReference>
<dbReference type="GO" id="GO:0008483">
    <property type="term" value="F:transaminase activity"/>
    <property type="evidence" value="ECO:0007669"/>
    <property type="project" value="InterPro"/>
</dbReference>
<dbReference type="GO" id="GO:0006782">
    <property type="term" value="P:protoporphyrinogen IX biosynthetic process"/>
    <property type="evidence" value="ECO:0007669"/>
    <property type="project" value="UniProtKB-UniRule"/>
</dbReference>
<dbReference type="CDD" id="cd00610">
    <property type="entry name" value="OAT_like"/>
    <property type="match status" value="1"/>
</dbReference>
<dbReference type="FunFam" id="3.40.640.10:FF:000021">
    <property type="entry name" value="Glutamate-1-semialdehyde 2,1-aminomutase"/>
    <property type="match status" value="1"/>
</dbReference>
<dbReference type="Gene3D" id="3.90.1150.10">
    <property type="entry name" value="Aspartate Aminotransferase, domain 1"/>
    <property type="match status" value="1"/>
</dbReference>
<dbReference type="Gene3D" id="3.40.640.10">
    <property type="entry name" value="Type I PLP-dependent aspartate aminotransferase-like (Major domain)"/>
    <property type="match status" value="1"/>
</dbReference>
<dbReference type="HAMAP" id="MF_00375">
    <property type="entry name" value="HemL_aminotrans_3"/>
    <property type="match status" value="1"/>
</dbReference>
<dbReference type="InterPro" id="IPR004639">
    <property type="entry name" value="4pyrrol_synth_GluAld_NH2Trfase"/>
</dbReference>
<dbReference type="InterPro" id="IPR005814">
    <property type="entry name" value="Aminotrans_3"/>
</dbReference>
<dbReference type="InterPro" id="IPR049704">
    <property type="entry name" value="Aminotrans_3_PPA_site"/>
</dbReference>
<dbReference type="InterPro" id="IPR015424">
    <property type="entry name" value="PyrdxlP-dep_Trfase"/>
</dbReference>
<dbReference type="InterPro" id="IPR015421">
    <property type="entry name" value="PyrdxlP-dep_Trfase_major"/>
</dbReference>
<dbReference type="InterPro" id="IPR015422">
    <property type="entry name" value="PyrdxlP-dep_Trfase_small"/>
</dbReference>
<dbReference type="NCBIfam" id="TIGR00713">
    <property type="entry name" value="hemL"/>
    <property type="match status" value="1"/>
</dbReference>
<dbReference type="NCBIfam" id="NF000818">
    <property type="entry name" value="PRK00062.1"/>
    <property type="match status" value="1"/>
</dbReference>
<dbReference type="PANTHER" id="PTHR43713">
    <property type="entry name" value="GLUTAMATE-1-SEMIALDEHYDE 2,1-AMINOMUTASE"/>
    <property type="match status" value="1"/>
</dbReference>
<dbReference type="PANTHER" id="PTHR43713:SF3">
    <property type="entry name" value="GLUTAMATE-1-SEMIALDEHYDE 2,1-AMINOMUTASE 1, CHLOROPLASTIC-RELATED"/>
    <property type="match status" value="1"/>
</dbReference>
<dbReference type="Pfam" id="PF00202">
    <property type="entry name" value="Aminotran_3"/>
    <property type="match status" value="1"/>
</dbReference>
<dbReference type="SUPFAM" id="SSF53383">
    <property type="entry name" value="PLP-dependent transferases"/>
    <property type="match status" value="1"/>
</dbReference>
<dbReference type="PROSITE" id="PS00600">
    <property type="entry name" value="AA_TRANSFER_CLASS_3"/>
    <property type="match status" value="1"/>
</dbReference>
<sequence>MKLDKSKELFDEAVNYLPGGVNSPVRAYKPYPFFAKSAKGSKIYDVDGNEYIDYCLGYGPLLFGHANEHIIEKSIEQLKLGTDYGVPSEKEVQLAKEVIKRVPCAQMVRFTNSGTEATMSAIRLARGITKRDKIIKFEGAYHGAHDAVLVKSGSGAAGLPDSPGIPTDTTKNTMLVEFNDEEALKKLINENKDEIACIIVEPVMGNIGCVPPKEGYLDFLREITLENGILLIIDEVITGFRISKGGAQEYYNVIPDLATFGKIVGGGFPIGAIAGKKEYMEQFTPSGKIYQAGTFSGNPMSINGGLAAFEVLDDNSYKQLHKSGEYFRNGIVDILDKLNINFHVNGVESMTQIYFTENEVYDYKTAQTSDTENFLKYFHLLLENGVFIAPSQYECGFISTSHSRDDLDKTLNAIEIALTKLYK</sequence>
<keyword id="KW-0963">Cytoplasm</keyword>
<keyword id="KW-0413">Isomerase</keyword>
<keyword id="KW-0627">Porphyrin biosynthesis</keyword>
<keyword id="KW-0663">Pyridoxal phosphate</keyword>
<keyword id="KW-1185">Reference proteome</keyword>
<comment type="catalytic activity">
    <reaction evidence="1">
        <text>(S)-4-amino-5-oxopentanoate = 5-aminolevulinate</text>
        <dbReference type="Rhea" id="RHEA:14265"/>
        <dbReference type="ChEBI" id="CHEBI:57501"/>
        <dbReference type="ChEBI" id="CHEBI:356416"/>
        <dbReference type="EC" id="5.4.3.8"/>
    </reaction>
</comment>
<comment type="cofactor">
    <cofactor evidence="1">
        <name>pyridoxal 5'-phosphate</name>
        <dbReference type="ChEBI" id="CHEBI:597326"/>
    </cofactor>
</comment>
<comment type="pathway">
    <text evidence="1">Porphyrin-containing compound metabolism; protoporphyrin-IX biosynthesis; 5-aminolevulinate from L-glutamyl-tRNA(Glu): step 2/2.</text>
</comment>
<comment type="subcellular location">
    <subcellularLocation>
        <location evidence="1">Cytoplasm</location>
    </subcellularLocation>
</comment>
<comment type="similarity">
    <text evidence="1">Belongs to the class-III pyridoxal-phosphate-dependent aminotransferase family. HemL subfamily.</text>
</comment>
<accession>Q2NF42</accession>
<protein>
    <recommendedName>
        <fullName evidence="1">Glutamate-1-semialdehyde 2,1-aminomutase</fullName>
        <shortName evidence="1">GSA</shortName>
        <ecNumber evidence="1">5.4.3.8</ecNumber>
    </recommendedName>
    <alternativeName>
        <fullName evidence="1">Glutamate-1-semialdehyde aminotransferase</fullName>
        <shortName evidence="1">GSA-AT</shortName>
    </alternativeName>
</protein>
<name>GSA_METST</name>
<proteinExistence type="inferred from homology"/>
<feature type="chain" id="PRO_0000243648" description="Glutamate-1-semialdehyde 2,1-aminomutase">
    <location>
        <begin position="1"/>
        <end position="423"/>
    </location>
</feature>
<feature type="modified residue" description="N6-(pyridoxal phosphate)lysine" evidence="1">
    <location>
        <position position="262"/>
    </location>
</feature>
<reference key="1">
    <citation type="journal article" date="2006" name="J. Bacteriol.">
        <title>The genome sequence of Methanosphaera stadtmanae reveals why this human intestinal archaeon is restricted to methanol and H2 for methane formation and ATP synthesis.</title>
        <authorList>
            <person name="Fricke W.F."/>
            <person name="Seedorf H."/>
            <person name="Henne A."/>
            <person name="Kruer M."/>
            <person name="Liesegang H."/>
            <person name="Hedderich R."/>
            <person name="Gottschalk G."/>
            <person name="Thauer R.K."/>
        </authorList>
    </citation>
    <scope>NUCLEOTIDE SEQUENCE [LARGE SCALE GENOMIC DNA]</scope>
    <source>
        <strain>ATCC 43021 / DSM 3091 / JCM 11832 / MCB-3</strain>
    </source>
</reference>